<sequence length="154" mass="15943">MAMKAVCVLKGDGPVQGTIHFEQKASGEPVVLSGQITGLTEGQHGFHVHQYGDNTQGCTSAGPHFNPHSKKHGGPADEERHVGDLGNVTAGKDGVANVSIEDRVISLSGEHSIIGRTMVVHEKQDDLGKGGNEESTKTGNAGSRLACGVIGIAQ</sequence>
<name>SODC_MOUSE</name>
<comment type="function">
    <text evidence="2">Destroys radicals which are normally produced within the cells and which are toxic to biological systems.</text>
</comment>
<comment type="catalytic activity">
    <reaction evidence="2">
        <text>2 superoxide + 2 H(+) = H2O2 + O2</text>
        <dbReference type="Rhea" id="RHEA:20696"/>
        <dbReference type="ChEBI" id="CHEBI:15378"/>
        <dbReference type="ChEBI" id="CHEBI:15379"/>
        <dbReference type="ChEBI" id="CHEBI:16240"/>
        <dbReference type="ChEBI" id="CHEBI:18421"/>
        <dbReference type="EC" id="1.15.1.1"/>
    </reaction>
</comment>
<comment type="cofactor">
    <cofactor evidence="2">
        <name>Cu cation</name>
        <dbReference type="ChEBI" id="CHEBI:23378"/>
    </cofactor>
    <text evidence="2">Binds 1 copper ion per subunit.</text>
</comment>
<comment type="cofactor">
    <cofactor evidence="2">
        <name>Zn(2+)</name>
        <dbReference type="ChEBI" id="CHEBI:29105"/>
    </cofactor>
    <text evidence="2">Binds 1 zinc ion per subunit.</text>
</comment>
<comment type="subunit">
    <text evidence="2 4">Homodimer; non-disulfide-linked (PubMed:20727846). Heterodimer with SOD1. The heterodimer CCS:SOD1 interacts with SLC31A1; this heterotrimer is Cu(1+)-mediated and its maintenance is regulated through SOD1 activation (By similarity).</text>
</comment>
<comment type="interaction">
    <interactant intactId="EBI-1635090">
        <id>P08228</id>
    </interactant>
    <interactant intactId="EBI-2735704">
        <id>P99029</id>
        <label>Prdx5</label>
    </interactant>
    <organismsDiffer>false</organismsDiffer>
    <experiments>2</experiments>
</comment>
<comment type="interaction">
    <interactant intactId="EBI-1635090">
        <id>P08228</id>
    </interactant>
    <interactant intactId="EBI-413646">
        <id>P63001</id>
        <label>Rac1</label>
    </interactant>
    <organismsDiffer>false</organismsDiffer>
    <experiments>4</experiments>
</comment>
<comment type="interaction">
    <interactant intactId="EBI-1635090">
        <id>P08228</id>
    </interactant>
    <interactant intactId="EBI-2310271">
        <id>O55042</id>
        <label>Snca</label>
    </interactant>
    <organismsDiffer>false</organismsDiffer>
    <experiments>2</experiments>
</comment>
<comment type="subcellular location">
    <subcellularLocation>
        <location evidence="2">Cytoplasm</location>
    </subcellularLocation>
    <subcellularLocation>
        <location evidence="2">Nucleus</location>
    </subcellularLocation>
</comment>
<comment type="PTM">
    <text evidence="2">Palmitoylation helps nuclear targeting and decreases catalytic activity.</text>
</comment>
<comment type="PTM">
    <text evidence="2">Succinylation, adjacent to copper catalytic site, probably inhibits activity. Desuccinylation by SIRT5 enhances activity.</text>
</comment>
<comment type="disruption phenotype">
    <text evidence="5">40% reduction in hepatic GPX1 activity.</text>
</comment>
<comment type="miscellaneous">
    <text evidence="6 7">A mouse model of ALS overexpressing human SOD1 variant 'Ala-94' exhibits disease onset at 89 days (males) and 99 days (females) (PubMed:29194436). There is a marked suppression of DAO expression and activity in the reticulospinal tract of the spinal cord, but not in the kidney or cerebellum; transgenic mice accumulate D-serine, but not D-alanine or D-aspartate, in their spinal cord (PubMed:22203986, PubMed:29194436). Simultaneous presence of the amyotrophic lateral sclerosis-associated human DAO variant 'Trp-188' potentiates the development of disease (PubMed:29194436).</text>
</comment>
<comment type="similarity">
    <text evidence="8">Belongs to the Cu-Zn superoxide dismutase family.</text>
</comment>
<reference key="1">
    <citation type="journal article" date="1988" name="Nucleic Acids Res.">
        <title>cDNA and deduced amino acid sequence of murine Cu-Zn superoxide dismutase.</title>
        <authorList>
            <person name="Bewley G.C."/>
        </authorList>
    </citation>
    <scope>NUCLEOTIDE SEQUENCE [MRNA]</scope>
    <source>
        <strain>SWR/J</strain>
        <tissue>Liver</tissue>
    </source>
</reference>
<reference key="2">
    <citation type="journal article" date="1991" name="Gene">
        <title>Isolation and analysis of the mouse genomic sequence encoding Cu(2+)-Zn2+ superoxide dismutase.</title>
        <authorList>
            <person name="Benedetto M.T."/>
            <person name="Anzai Y."/>
            <person name="Gordon J.W."/>
        </authorList>
    </citation>
    <scope>NUCLEOTIDE SEQUENCE [GENOMIC DNA]</scope>
</reference>
<reference key="3">
    <citation type="journal article" date="2005" name="Science">
        <title>The transcriptional landscape of the mammalian genome.</title>
        <authorList>
            <person name="Carninci P."/>
            <person name="Kasukawa T."/>
            <person name="Katayama S."/>
            <person name="Gough J."/>
            <person name="Frith M.C."/>
            <person name="Maeda N."/>
            <person name="Oyama R."/>
            <person name="Ravasi T."/>
            <person name="Lenhard B."/>
            <person name="Wells C."/>
            <person name="Kodzius R."/>
            <person name="Shimokawa K."/>
            <person name="Bajic V.B."/>
            <person name="Brenner S.E."/>
            <person name="Batalov S."/>
            <person name="Forrest A.R."/>
            <person name="Zavolan M."/>
            <person name="Davis M.J."/>
            <person name="Wilming L.G."/>
            <person name="Aidinis V."/>
            <person name="Allen J.E."/>
            <person name="Ambesi-Impiombato A."/>
            <person name="Apweiler R."/>
            <person name="Aturaliya R.N."/>
            <person name="Bailey T.L."/>
            <person name="Bansal M."/>
            <person name="Baxter L."/>
            <person name="Beisel K.W."/>
            <person name="Bersano T."/>
            <person name="Bono H."/>
            <person name="Chalk A.M."/>
            <person name="Chiu K.P."/>
            <person name="Choudhary V."/>
            <person name="Christoffels A."/>
            <person name="Clutterbuck D.R."/>
            <person name="Crowe M.L."/>
            <person name="Dalla E."/>
            <person name="Dalrymple B.P."/>
            <person name="de Bono B."/>
            <person name="Della Gatta G."/>
            <person name="di Bernardo D."/>
            <person name="Down T."/>
            <person name="Engstrom P."/>
            <person name="Fagiolini M."/>
            <person name="Faulkner G."/>
            <person name="Fletcher C.F."/>
            <person name="Fukushima T."/>
            <person name="Furuno M."/>
            <person name="Futaki S."/>
            <person name="Gariboldi M."/>
            <person name="Georgii-Hemming P."/>
            <person name="Gingeras T.R."/>
            <person name="Gojobori T."/>
            <person name="Green R.E."/>
            <person name="Gustincich S."/>
            <person name="Harbers M."/>
            <person name="Hayashi Y."/>
            <person name="Hensch T.K."/>
            <person name="Hirokawa N."/>
            <person name="Hill D."/>
            <person name="Huminiecki L."/>
            <person name="Iacono M."/>
            <person name="Ikeo K."/>
            <person name="Iwama A."/>
            <person name="Ishikawa T."/>
            <person name="Jakt M."/>
            <person name="Kanapin A."/>
            <person name="Katoh M."/>
            <person name="Kawasawa Y."/>
            <person name="Kelso J."/>
            <person name="Kitamura H."/>
            <person name="Kitano H."/>
            <person name="Kollias G."/>
            <person name="Krishnan S.P."/>
            <person name="Kruger A."/>
            <person name="Kummerfeld S.K."/>
            <person name="Kurochkin I.V."/>
            <person name="Lareau L.F."/>
            <person name="Lazarevic D."/>
            <person name="Lipovich L."/>
            <person name="Liu J."/>
            <person name="Liuni S."/>
            <person name="McWilliam S."/>
            <person name="Madan Babu M."/>
            <person name="Madera M."/>
            <person name="Marchionni L."/>
            <person name="Matsuda H."/>
            <person name="Matsuzawa S."/>
            <person name="Miki H."/>
            <person name="Mignone F."/>
            <person name="Miyake S."/>
            <person name="Morris K."/>
            <person name="Mottagui-Tabar S."/>
            <person name="Mulder N."/>
            <person name="Nakano N."/>
            <person name="Nakauchi H."/>
            <person name="Ng P."/>
            <person name="Nilsson R."/>
            <person name="Nishiguchi S."/>
            <person name="Nishikawa S."/>
            <person name="Nori F."/>
            <person name="Ohara O."/>
            <person name="Okazaki Y."/>
            <person name="Orlando V."/>
            <person name="Pang K.C."/>
            <person name="Pavan W.J."/>
            <person name="Pavesi G."/>
            <person name="Pesole G."/>
            <person name="Petrovsky N."/>
            <person name="Piazza S."/>
            <person name="Reed J."/>
            <person name="Reid J.F."/>
            <person name="Ring B.Z."/>
            <person name="Ringwald M."/>
            <person name="Rost B."/>
            <person name="Ruan Y."/>
            <person name="Salzberg S.L."/>
            <person name="Sandelin A."/>
            <person name="Schneider C."/>
            <person name="Schoenbach C."/>
            <person name="Sekiguchi K."/>
            <person name="Semple C.A."/>
            <person name="Seno S."/>
            <person name="Sessa L."/>
            <person name="Sheng Y."/>
            <person name="Shibata Y."/>
            <person name="Shimada H."/>
            <person name="Shimada K."/>
            <person name="Silva D."/>
            <person name="Sinclair B."/>
            <person name="Sperling S."/>
            <person name="Stupka E."/>
            <person name="Sugiura K."/>
            <person name="Sultana R."/>
            <person name="Takenaka Y."/>
            <person name="Taki K."/>
            <person name="Tammoja K."/>
            <person name="Tan S.L."/>
            <person name="Tang S."/>
            <person name="Taylor M.S."/>
            <person name="Tegner J."/>
            <person name="Teichmann S.A."/>
            <person name="Ueda H.R."/>
            <person name="van Nimwegen E."/>
            <person name="Verardo R."/>
            <person name="Wei C.L."/>
            <person name="Yagi K."/>
            <person name="Yamanishi H."/>
            <person name="Zabarovsky E."/>
            <person name="Zhu S."/>
            <person name="Zimmer A."/>
            <person name="Hide W."/>
            <person name="Bult C."/>
            <person name="Grimmond S.M."/>
            <person name="Teasdale R.D."/>
            <person name="Liu E.T."/>
            <person name="Brusic V."/>
            <person name="Quackenbush J."/>
            <person name="Wahlestedt C."/>
            <person name="Mattick J.S."/>
            <person name="Hume D.A."/>
            <person name="Kai C."/>
            <person name="Sasaki D."/>
            <person name="Tomaru Y."/>
            <person name="Fukuda S."/>
            <person name="Kanamori-Katayama M."/>
            <person name="Suzuki M."/>
            <person name="Aoki J."/>
            <person name="Arakawa T."/>
            <person name="Iida J."/>
            <person name="Imamura K."/>
            <person name="Itoh M."/>
            <person name="Kato T."/>
            <person name="Kawaji H."/>
            <person name="Kawagashira N."/>
            <person name="Kawashima T."/>
            <person name="Kojima M."/>
            <person name="Kondo S."/>
            <person name="Konno H."/>
            <person name="Nakano K."/>
            <person name="Ninomiya N."/>
            <person name="Nishio T."/>
            <person name="Okada M."/>
            <person name="Plessy C."/>
            <person name="Shibata K."/>
            <person name="Shiraki T."/>
            <person name="Suzuki S."/>
            <person name="Tagami M."/>
            <person name="Waki K."/>
            <person name="Watahiki A."/>
            <person name="Okamura-Oho Y."/>
            <person name="Suzuki H."/>
            <person name="Kawai J."/>
            <person name="Hayashizaki Y."/>
        </authorList>
    </citation>
    <scope>NUCLEOTIDE SEQUENCE [LARGE SCALE MRNA]</scope>
    <source>
        <strain>C57BL/6J</strain>
        <tissue>Ovary</tissue>
        <tissue>Urinary bladder</tissue>
        <tissue>Uterus</tissue>
    </source>
</reference>
<reference key="4">
    <citation type="journal article" date="2004" name="Genome Res.">
        <title>The status, quality, and expansion of the NIH full-length cDNA project: the Mammalian Gene Collection (MGC).</title>
        <authorList>
            <consortium name="The MGC Project Team"/>
        </authorList>
    </citation>
    <scope>NUCLEOTIDE SEQUENCE [LARGE SCALE MRNA]</scope>
    <source>
        <strain>C57BL/6J</strain>
        <tissue>Liver</tissue>
        <tissue>Mammary gland</tissue>
        <tissue>Retina</tissue>
    </source>
</reference>
<reference key="5">
    <citation type="journal article" date="1990" name="J. Cell Biol.">
        <title>Purification of an inhibitor of erythroid progenitor cell cycling and antagonist to interleukin 3 from mouse marrow cell supernatants and its identification as cytosolic superoxide dismutase.</title>
        <authorList>
            <person name="Pluthero F.G."/>
            <person name="Shreeve M."/>
            <person name="Eskinazi D."/>
            <person name="van der Gaag H."/>
            <person name="Huang K.S."/>
            <person name="Hulmes J.D."/>
            <person name="Blum M."/>
            <person name="Axelrad A.A."/>
        </authorList>
    </citation>
    <scope>PROTEIN SEQUENCE OF 4-23</scope>
</reference>
<reference key="6">
    <citation type="submission" date="2009-01" db="UniProtKB">
        <authorList>
            <person name="Lubec G."/>
            <person name="Klug S."/>
            <person name="Sunyer B."/>
            <person name="Chen W.-Q."/>
        </authorList>
    </citation>
    <scope>PROTEIN SEQUENCE OF 11-24 AND 104-116</scope>
    <scope>IDENTIFICATION BY MASS SPECTROMETRY</scope>
    <source>
        <strain>OF1</strain>
        <tissue>Hippocampus</tissue>
    </source>
</reference>
<reference key="7">
    <citation type="journal article" date="2010" name="Cell">
        <title>A tissue-specific atlas of mouse protein phosphorylation and expression.</title>
        <authorList>
            <person name="Huttlin E.L."/>
            <person name="Jedrychowski M.P."/>
            <person name="Elias J.E."/>
            <person name="Goswami T."/>
            <person name="Rad R."/>
            <person name="Beausoleil S.A."/>
            <person name="Villen J."/>
            <person name="Haas W."/>
            <person name="Sowa M.E."/>
            <person name="Gygi S.P."/>
        </authorList>
    </citation>
    <scope>PHOSPHORYLATION [LARGE SCALE ANALYSIS] AT SER-108</scope>
    <scope>IDENTIFICATION BY MASS SPECTROMETRY [LARGE SCALE ANALYSIS]</scope>
    <source>
        <tissue>Brain</tissue>
        <tissue>Brown adipose tissue</tissue>
        <tissue>Heart</tissue>
        <tissue>Kidney</tissue>
        <tissue>Liver</tissue>
        <tissue>Lung</tissue>
        <tissue>Pancreas</tissue>
        <tissue>Spleen</tissue>
        <tissue>Testis</tissue>
    </source>
</reference>
<reference key="8">
    <citation type="journal article" date="2011" name="Free Radic. Biol. Med.">
        <title>Knockout of SOD1 promotes conversion of selenocysteine to dehydroalanine in murine hepatic GPX1 protein.</title>
        <authorList>
            <person name="Wang S.K."/>
            <person name="Weaver J.D."/>
            <person name="Zhang S."/>
            <person name="Lei X.G."/>
        </authorList>
    </citation>
    <scope>DISRUPTION PHENOTYPE</scope>
    <source>
        <tissue>Liver</tissue>
    </source>
</reference>
<reference key="9">
    <citation type="journal article" date="2012" name="Proc. Natl. Acad. Sci. U.S.A.">
        <title>D-amino acid oxidase controls motoneuron degeneration through D-serine.</title>
        <authorList>
            <person name="Sasabe J."/>
            <person name="Miyoshi Y."/>
            <person name="Suzuki M."/>
            <person name="Mita M."/>
            <person name="Konno R."/>
            <person name="Matsuoka M."/>
            <person name="Hamase K."/>
            <person name="Aiso S."/>
        </authorList>
    </citation>
    <scope>CHARACTERISTICS OF THE MOUSE MODEL OF ALS</scope>
</reference>
<reference key="10">
    <citation type="journal article" date="2013" name="Mol. Cell">
        <title>SIRT5-mediated lysine desuccinylation impacts diverse metabolic pathways.</title>
        <authorList>
            <person name="Park J."/>
            <person name="Chen Y."/>
            <person name="Tishkoff D.X."/>
            <person name="Peng C."/>
            <person name="Tan M."/>
            <person name="Dai L."/>
            <person name="Xie Z."/>
            <person name="Zhang Y."/>
            <person name="Zwaans B.M."/>
            <person name="Skinner M.E."/>
            <person name="Lombard D.B."/>
            <person name="Zhao Y."/>
        </authorList>
    </citation>
    <scope>ACETYLATION [LARGE SCALE ANALYSIS] AT ALA-2 AND LYS-123</scope>
    <scope>SUCCINYLATION [LARGE SCALE ANALYSIS] AT LYS-4; LYS-10; LYS-92; LYS-123 AND LYS-137</scope>
    <scope>CLEAVAGE OF INITIATOR METHIONINE [LARGE SCALE ANALYSIS]</scope>
    <scope>IDENTIFICATION BY MASS SPECTROMETRY [LARGE SCALE ANALYSIS]</scope>
    <source>
        <tissue>Embryonic fibroblast</tissue>
        <tissue>Liver</tissue>
    </source>
</reference>
<reference key="11">
    <citation type="journal article" date="2013" name="Proc. Natl. Acad. Sci. U.S.A.">
        <title>Label-free quantitative proteomics of the lysine acetylome in mitochondria identifies substrates of SIRT3 in metabolic pathways.</title>
        <authorList>
            <person name="Rardin M.J."/>
            <person name="Newman J.C."/>
            <person name="Held J.M."/>
            <person name="Cusack M.P."/>
            <person name="Sorensen D.J."/>
            <person name="Li B."/>
            <person name="Schilling B."/>
            <person name="Mooney S.D."/>
            <person name="Kahn C.R."/>
            <person name="Verdin E."/>
            <person name="Gibson B.W."/>
        </authorList>
    </citation>
    <scope>ACETYLATION [LARGE SCALE ANALYSIS] AT LYS-137</scope>
    <scope>IDENTIFICATION BY MASS SPECTROMETRY [LARGE SCALE ANALYSIS]</scope>
    <source>
        <tissue>Liver</tissue>
    </source>
</reference>
<reference key="12">
    <citation type="journal article" date="2017" name="PLoS ONE">
        <title>Characterisation of the pathogenic effects of the in vivo expression of an ALS-linked mutation in D-amino acid oxidase: Phenotype and loss of spinal cord motor neurons.</title>
        <authorList>
            <person name="Kondori N.R."/>
            <person name="Paul P."/>
            <person name="Robbins J.P."/>
            <person name="Liu K."/>
            <person name="Hildyard J.C.W."/>
            <person name="Wells D.J."/>
            <person name="de Belleroche J.S."/>
        </authorList>
    </citation>
    <scope>CHARACTERISTICS OF THE MOUSE MODEL OF ALS</scope>
</reference>
<reference key="13">
    <citation type="journal article" date="2010" name="Arch. Biochem. Biophys.">
        <title>Structures of mouse SOD1 and human/mouse SOD1 chimeras.</title>
        <authorList>
            <person name="Seetharaman S.V."/>
            <person name="Taylor A.B."/>
            <person name="Holloway S."/>
            <person name="Hart P.J."/>
        </authorList>
    </citation>
    <scope>X-RAY CRYSTALLOGRAPHY (2.20 ANGSTROMS) OF 2-154 IN COMPLEX WITH ZINC</scope>
</reference>
<accession>P08228</accession>
<feature type="initiator methionine" description="Removed" evidence="12">
    <location>
        <position position="1"/>
    </location>
</feature>
<feature type="chain" id="PRO_0000164062" description="Superoxide dismutase [Cu-Zn]">
    <location>
        <begin position="2"/>
        <end position="154"/>
    </location>
</feature>
<feature type="binding site" evidence="1">
    <location>
        <position position="47"/>
    </location>
    <ligand>
        <name>Cu cation</name>
        <dbReference type="ChEBI" id="CHEBI:23378"/>
        <note>catalytic</note>
    </ligand>
</feature>
<feature type="binding site" evidence="1">
    <location>
        <position position="49"/>
    </location>
    <ligand>
        <name>Cu cation</name>
        <dbReference type="ChEBI" id="CHEBI:23378"/>
        <note>catalytic</note>
    </ligand>
</feature>
<feature type="binding site" evidence="1">
    <location>
        <position position="64"/>
    </location>
    <ligand>
        <name>Cu cation</name>
        <dbReference type="ChEBI" id="CHEBI:23378"/>
        <note>catalytic</note>
    </ligand>
</feature>
<feature type="binding site" evidence="4">
    <location>
        <position position="64"/>
    </location>
    <ligand>
        <name>Zn(2+)</name>
        <dbReference type="ChEBI" id="CHEBI:29105"/>
        <note>structural</note>
    </ligand>
</feature>
<feature type="binding site" evidence="4">
    <location>
        <position position="72"/>
    </location>
    <ligand>
        <name>Zn(2+)</name>
        <dbReference type="ChEBI" id="CHEBI:29105"/>
        <note>structural</note>
    </ligand>
</feature>
<feature type="binding site" evidence="4">
    <location>
        <position position="81"/>
    </location>
    <ligand>
        <name>Zn(2+)</name>
        <dbReference type="ChEBI" id="CHEBI:29105"/>
        <note>structural</note>
    </ligand>
</feature>
<feature type="binding site" evidence="4">
    <location>
        <position position="84"/>
    </location>
    <ligand>
        <name>Zn(2+)</name>
        <dbReference type="ChEBI" id="CHEBI:29105"/>
        <note>structural</note>
    </ligand>
</feature>
<feature type="binding site" evidence="1">
    <location>
        <position position="121"/>
    </location>
    <ligand>
        <name>Cu cation</name>
        <dbReference type="ChEBI" id="CHEBI:23378"/>
        <note>catalytic</note>
    </ligand>
</feature>
<feature type="modified residue" description="N-acetylalanine" evidence="12">
    <location>
        <position position="2"/>
    </location>
</feature>
<feature type="modified residue" description="N6-succinyllysine" evidence="12">
    <location>
        <position position="4"/>
    </location>
</feature>
<feature type="modified residue" description="N6-succinyllysine" evidence="12">
    <location>
        <position position="10"/>
    </location>
</feature>
<feature type="modified residue" description="N6-succinyllysine" evidence="12">
    <location>
        <position position="92"/>
    </location>
</feature>
<feature type="modified residue" description="Phosphoserine" evidence="2">
    <location>
        <position position="99"/>
    </location>
</feature>
<feature type="modified residue" description="Phosphoserine" evidence="3">
    <location>
        <position position="106"/>
    </location>
</feature>
<feature type="modified residue" description="Phosphoserine" evidence="10">
    <location>
        <position position="108"/>
    </location>
</feature>
<feature type="modified residue" description="N6-acetyllysine; alternate" evidence="12">
    <location>
        <position position="123"/>
    </location>
</feature>
<feature type="modified residue" description="N6-succinyllysine; alternate" evidence="12">
    <location>
        <position position="123"/>
    </location>
</feature>
<feature type="modified residue" description="N6-acetyllysine; alternate" evidence="11">
    <location>
        <position position="137"/>
    </location>
</feature>
<feature type="modified residue" description="N6-succinyllysine; alternate" evidence="12">
    <location>
        <position position="137"/>
    </location>
</feature>
<feature type="lipid moiety-binding region" description="S-palmitoyl cysteine" evidence="1">
    <location>
        <position position="7"/>
    </location>
</feature>
<feature type="disulfide bond" evidence="1">
    <location>
        <begin position="58"/>
        <end position="147"/>
    </location>
</feature>
<feature type="sequence conflict" description="In Ref. 2; AAA40121." evidence="8" ref="2">
    <original>D</original>
    <variation>H</variation>
    <location>
        <position position="102"/>
    </location>
</feature>
<feature type="strand" evidence="13">
    <location>
        <begin position="3"/>
        <end position="10"/>
    </location>
</feature>
<feature type="strand" evidence="13">
    <location>
        <begin position="12"/>
        <end position="14"/>
    </location>
</feature>
<feature type="strand" evidence="13">
    <location>
        <begin position="16"/>
        <end position="25"/>
    </location>
</feature>
<feature type="strand" evidence="13">
    <location>
        <begin position="30"/>
        <end position="38"/>
    </location>
</feature>
<feature type="strand" evidence="13">
    <location>
        <begin position="41"/>
        <end position="50"/>
    </location>
</feature>
<feature type="turn" evidence="13">
    <location>
        <begin position="55"/>
        <end position="58"/>
    </location>
</feature>
<feature type="helix" evidence="13">
    <location>
        <begin position="59"/>
        <end position="61"/>
    </location>
</feature>
<feature type="strand" evidence="15">
    <location>
        <begin position="77"/>
        <end position="79"/>
    </location>
</feature>
<feature type="strand" evidence="13">
    <location>
        <begin position="84"/>
        <end position="90"/>
    </location>
</feature>
<feature type="strand" evidence="14">
    <location>
        <begin position="96"/>
        <end position="109"/>
    </location>
</feature>
<feature type="strand" evidence="14">
    <location>
        <begin position="116"/>
        <end position="123"/>
    </location>
</feature>
<feature type="strand" evidence="14">
    <location>
        <begin position="130"/>
        <end position="132"/>
    </location>
</feature>
<feature type="helix" evidence="14">
    <location>
        <begin position="133"/>
        <end position="138"/>
    </location>
</feature>
<feature type="strand" evidence="14">
    <location>
        <begin position="143"/>
        <end position="149"/>
    </location>
</feature>
<dbReference type="EC" id="1.15.1.1" evidence="2"/>
<dbReference type="EMBL" id="X06683">
    <property type="protein sequence ID" value="CAA29880.1"/>
    <property type="molecule type" value="mRNA"/>
</dbReference>
<dbReference type="EMBL" id="M60798">
    <property type="protein sequence ID" value="AAA40121.1"/>
    <property type="molecule type" value="Genomic_DNA"/>
</dbReference>
<dbReference type="EMBL" id="M60794">
    <property type="protein sequence ID" value="AAA40121.1"/>
    <property type="status" value="JOINED"/>
    <property type="molecule type" value="Genomic_DNA"/>
</dbReference>
<dbReference type="EMBL" id="M60795">
    <property type="protein sequence ID" value="AAA40121.1"/>
    <property type="status" value="JOINED"/>
    <property type="molecule type" value="Genomic_DNA"/>
</dbReference>
<dbReference type="EMBL" id="M60796">
    <property type="protein sequence ID" value="AAA40121.1"/>
    <property type="status" value="JOINED"/>
    <property type="molecule type" value="Genomic_DNA"/>
</dbReference>
<dbReference type="EMBL" id="M60797">
    <property type="protein sequence ID" value="AAA40121.1"/>
    <property type="status" value="JOINED"/>
    <property type="molecule type" value="Genomic_DNA"/>
</dbReference>
<dbReference type="EMBL" id="M35725">
    <property type="protein sequence ID" value="AAA37518.1"/>
    <property type="molecule type" value="mRNA"/>
</dbReference>
<dbReference type="EMBL" id="AK020624">
    <property type="protein sequence ID" value="BAB32154.1"/>
    <property type="molecule type" value="mRNA"/>
</dbReference>
<dbReference type="EMBL" id="AK077284">
    <property type="protein sequence ID" value="BAC36730.1"/>
    <property type="molecule type" value="mRNA"/>
</dbReference>
<dbReference type="EMBL" id="BC002066">
    <property type="protein sequence ID" value="AAH02066.1"/>
    <property type="molecule type" value="mRNA"/>
</dbReference>
<dbReference type="EMBL" id="BC048874">
    <property type="protein sequence ID" value="AAH48874.1"/>
    <property type="molecule type" value="mRNA"/>
</dbReference>
<dbReference type="EMBL" id="BC086886">
    <property type="protein sequence ID" value="AAH86886.1"/>
    <property type="molecule type" value="mRNA"/>
</dbReference>
<dbReference type="CCDS" id="CCDS37395.1"/>
<dbReference type="PIR" id="JQ0915">
    <property type="entry name" value="JQ0915"/>
</dbReference>
<dbReference type="RefSeq" id="NP_035564.1">
    <property type="nucleotide sequence ID" value="NM_011434.2"/>
</dbReference>
<dbReference type="PDB" id="3GTT">
    <property type="method" value="X-ray"/>
    <property type="resolution" value="2.40 A"/>
    <property type="chains" value="A/B/C/D/E/F=2-154"/>
</dbReference>
<dbReference type="PDB" id="3GTV">
    <property type="method" value="X-ray"/>
    <property type="resolution" value="2.20 A"/>
    <property type="chains" value="A/B/C/D/E/F/G/H/I/J/K/L=82-154"/>
</dbReference>
<dbReference type="PDB" id="3LTV">
    <property type="method" value="X-ray"/>
    <property type="resolution" value="2.45 A"/>
    <property type="chains" value="A/B/C/D/E/F=2-81"/>
</dbReference>
<dbReference type="PDBsum" id="3GTT"/>
<dbReference type="PDBsum" id="3GTV"/>
<dbReference type="PDBsum" id="3LTV"/>
<dbReference type="SMR" id="P08228"/>
<dbReference type="BioGRID" id="203387">
    <property type="interactions" value="43"/>
</dbReference>
<dbReference type="ComplexPortal" id="CPX-2898">
    <property type="entry name" value="[Cu-Zn] Superoxide dismutase complex"/>
</dbReference>
<dbReference type="DIP" id="DIP-48691N"/>
<dbReference type="FunCoup" id="P08228">
    <property type="interactions" value="1868"/>
</dbReference>
<dbReference type="IntAct" id="P08228">
    <property type="interactions" value="51"/>
</dbReference>
<dbReference type="MINT" id="P08228"/>
<dbReference type="STRING" id="10090.ENSMUSP00000023707"/>
<dbReference type="GlyGen" id="P08228">
    <property type="glycosylation" value="2 sites, 1 N-linked glycan (1 site), 1 O-linked glycan (1 site)"/>
</dbReference>
<dbReference type="iPTMnet" id="P08228"/>
<dbReference type="PhosphoSitePlus" id="P08228"/>
<dbReference type="SwissPalm" id="P08228"/>
<dbReference type="REPRODUCTION-2DPAGE" id="IPI00130589"/>
<dbReference type="REPRODUCTION-2DPAGE" id="P08228"/>
<dbReference type="CPTAC" id="non-CPTAC-3945"/>
<dbReference type="jPOST" id="P08228"/>
<dbReference type="PaxDb" id="10090-ENSMUSP00000023707"/>
<dbReference type="PeptideAtlas" id="P08228"/>
<dbReference type="ProteomicsDB" id="258707"/>
<dbReference type="Pumba" id="P08228"/>
<dbReference type="Antibodypedia" id="786">
    <property type="antibodies" value="1558 antibodies from 49 providers"/>
</dbReference>
<dbReference type="DNASU" id="20655"/>
<dbReference type="Ensembl" id="ENSMUST00000023707.11">
    <property type="protein sequence ID" value="ENSMUSP00000023707.10"/>
    <property type="gene ID" value="ENSMUSG00000022982.11"/>
</dbReference>
<dbReference type="GeneID" id="20655"/>
<dbReference type="KEGG" id="mmu:20655"/>
<dbReference type="UCSC" id="uc007zvz.1">
    <property type="organism name" value="mouse"/>
</dbReference>
<dbReference type="AGR" id="MGI:98351"/>
<dbReference type="CTD" id="6647"/>
<dbReference type="MGI" id="MGI:98351">
    <property type="gene designation" value="Sod1"/>
</dbReference>
<dbReference type="VEuPathDB" id="HostDB:ENSMUSG00000022982"/>
<dbReference type="eggNOG" id="KOG0441">
    <property type="taxonomic scope" value="Eukaryota"/>
</dbReference>
<dbReference type="GeneTree" id="ENSGT00940000155551"/>
<dbReference type="HOGENOM" id="CLU_056632_4_1_1"/>
<dbReference type="InParanoid" id="P08228"/>
<dbReference type="OMA" id="AQRGFHI"/>
<dbReference type="OrthoDB" id="2015551at2759"/>
<dbReference type="PhylomeDB" id="P08228"/>
<dbReference type="TreeFam" id="TF105131"/>
<dbReference type="Reactome" id="R-MMU-114608">
    <property type="pathway name" value="Platelet degranulation"/>
</dbReference>
<dbReference type="Reactome" id="R-MMU-3299685">
    <property type="pathway name" value="Detoxification of Reactive Oxygen Species"/>
</dbReference>
<dbReference type="BioGRID-ORCS" id="20655">
    <property type="hits" value="30 hits in 77 CRISPR screens"/>
</dbReference>
<dbReference type="CD-CODE" id="D12E4DB9">
    <property type="entry name" value="Stress granule"/>
</dbReference>
<dbReference type="ChiTaRS" id="Sod1">
    <property type="organism name" value="mouse"/>
</dbReference>
<dbReference type="EvolutionaryTrace" id="P08228"/>
<dbReference type="PRO" id="PR:P08228"/>
<dbReference type="Proteomes" id="UP000000589">
    <property type="component" value="Chromosome 16"/>
</dbReference>
<dbReference type="RNAct" id="P08228">
    <property type="molecule type" value="protein"/>
</dbReference>
<dbReference type="Bgee" id="ENSMUSG00000022982">
    <property type="expression patterns" value="Expressed in otolith organ and 274 other cell types or tissues"/>
</dbReference>
<dbReference type="GO" id="GO:1904115">
    <property type="term" value="C:axon cytoplasm"/>
    <property type="evidence" value="ECO:0007669"/>
    <property type="project" value="GOC"/>
</dbReference>
<dbReference type="GO" id="GO:0005737">
    <property type="term" value="C:cytoplasm"/>
    <property type="evidence" value="ECO:0000250"/>
    <property type="project" value="UniProtKB"/>
</dbReference>
<dbReference type="GO" id="GO:0031410">
    <property type="term" value="C:cytoplasmic vesicle"/>
    <property type="evidence" value="ECO:0000250"/>
    <property type="project" value="UniProtKB"/>
</dbReference>
<dbReference type="GO" id="GO:0005829">
    <property type="term" value="C:cytosol"/>
    <property type="evidence" value="ECO:0000250"/>
    <property type="project" value="UniProtKB"/>
</dbReference>
<dbReference type="GO" id="GO:0032839">
    <property type="term" value="C:dendrite cytoplasm"/>
    <property type="evidence" value="ECO:0000250"/>
    <property type="project" value="UniProtKB"/>
</dbReference>
<dbReference type="GO" id="GO:0031045">
    <property type="term" value="C:dense core granule"/>
    <property type="evidence" value="ECO:0007669"/>
    <property type="project" value="Ensembl"/>
</dbReference>
<dbReference type="GO" id="GO:0005615">
    <property type="term" value="C:extracellular space"/>
    <property type="evidence" value="ECO:0000314"/>
    <property type="project" value="MGI"/>
</dbReference>
<dbReference type="GO" id="GO:0005764">
    <property type="term" value="C:lysosome"/>
    <property type="evidence" value="ECO:0007669"/>
    <property type="project" value="Ensembl"/>
</dbReference>
<dbReference type="GO" id="GO:0005758">
    <property type="term" value="C:mitochondrial intermembrane space"/>
    <property type="evidence" value="ECO:0000304"/>
    <property type="project" value="Reactome"/>
</dbReference>
<dbReference type="GO" id="GO:0005739">
    <property type="term" value="C:mitochondrion"/>
    <property type="evidence" value="ECO:0007005"/>
    <property type="project" value="MGI"/>
</dbReference>
<dbReference type="GO" id="GO:0043209">
    <property type="term" value="C:myelin sheath"/>
    <property type="evidence" value="ECO:0007005"/>
    <property type="project" value="UniProtKB"/>
</dbReference>
<dbReference type="GO" id="GO:0043025">
    <property type="term" value="C:neuronal cell body"/>
    <property type="evidence" value="ECO:0000250"/>
    <property type="project" value="UniProtKB"/>
</dbReference>
<dbReference type="GO" id="GO:0005654">
    <property type="term" value="C:nucleoplasm"/>
    <property type="evidence" value="ECO:0007669"/>
    <property type="project" value="Ensembl"/>
</dbReference>
<dbReference type="GO" id="GO:0005634">
    <property type="term" value="C:nucleus"/>
    <property type="evidence" value="ECO:0000250"/>
    <property type="project" value="UniProtKB"/>
</dbReference>
<dbReference type="GO" id="GO:0005777">
    <property type="term" value="C:peroxisome"/>
    <property type="evidence" value="ECO:0007669"/>
    <property type="project" value="Ensembl"/>
</dbReference>
<dbReference type="GO" id="GO:0005886">
    <property type="term" value="C:plasma membrane"/>
    <property type="evidence" value="ECO:0007669"/>
    <property type="project" value="Ensembl"/>
</dbReference>
<dbReference type="GO" id="GO:0032991">
    <property type="term" value="C:protein-containing complex"/>
    <property type="evidence" value="ECO:0000250"/>
    <property type="project" value="UniProtKB"/>
</dbReference>
<dbReference type="GO" id="GO:0005507">
    <property type="term" value="F:copper ion binding"/>
    <property type="evidence" value="ECO:0000250"/>
    <property type="project" value="UniProtKB"/>
</dbReference>
<dbReference type="GO" id="GO:0042803">
    <property type="term" value="F:protein homodimerization activity"/>
    <property type="evidence" value="ECO:0007669"/>
    <property type="project" value="Ensembl"/>
</dbReference>
<dbReference type="GO" id="GO:0030346">
    <property type="term" value="F:protein phosphatase 2B binding"/>
    <property type="evidence" value="ECO:0000250"/>
    <property type="project" value="UniProtKB"/>
</dbReference>
<dbReference type="GO" id="GO:0051087">
    <property type="term" value="F:protein-folding chaperone binding"/>
    <property type="evidence" value="ECO:0000250"/>
    <property type="project" value="UniProtKB"/>
</dbReference>
<dbReference type="GO" id="GO:0031267">
    <property type="term" value="F:small GTPase binding"/>
    <property type="evidence" value="ECO:0007669"/>
    <property type="project" value="Ensembl"/>
</dbReference>
<dbReference type="GO" id="GO:0004784">
    <property type="term" value="F:superoxide dismutase activity"/>
    <property type="evidence" value="ECO:0000314"/>
    <property type="project" value="MGI"/>
</dbReference>
<dbReference type="GO" id="GO:0008270">
    <property type="term" value="F:zinc ion binding"/>
    <property type="evidence" value="ECO:0000250"/>
    <property type="project" value="UniProtKB"/>
</dbReference>
<dbReference type="GO" id="GO:0099610">
    <property type="term" value="P:action potential initiation"/>
    <property type="evidence" value="ECO:0000315"/>
    <property type="project" value="MGI"/>
</dbReference>
<dbReference type="GO" id="GO:0008089">
    <property type="term" value="P:anterograde axonal transport"/>
    <property type="evidence" value="ECO:0000315"/>
    <property type="project" value="BHF-UCL"/>
</dbReference>
<dbReference type="GO" id="GO:0006915">
    <property type="term" value="P:apoptotic process"/>
    <property type="evidence" value="ECO:0000315"/>
    <property type="project" value="MGI"/>
</dbReference>
<dbReference type="GO" id="GO:0060088">
    <property type="term" value="P:auditory receptor cell stereocilium organization"/>
    <property type="evidence" value="ECO:0000315"/>
    <property type="project" value="MGI"/>
</dbReference>
<dbReference type="GO" id="GO:0071318">
    <property type="term" value="P:cellular response to ATP"/>
    <property type="evidence" value="ECO:0007669"/>
    <property type="project" value="Ensembl"/>
</dbReference>
<dbReference type="GO" id="GO:0071276">
    <property type="term" value="P:cellular response to cadmium ion"/>
    <property type="evidence" value="ECO:0007669"/>
    <property type="project" value="Ensembl"/>
</dbReference>
<dbReference type="GO" id="GO:0035865">
    <property type="term" value="P:cellular response to potassium ion"/>
    <property type="evidence" value="ECO:0007669"/>
    <property type="project" value="Ensembl"/>
</dbReference>
<dbReference type="GO" id="GO:0008340">
    <property type="term" value="P:determination of adult lifespan"/>
    <property type="evidence" value="ECO:0000315"/>
    <property type="project" value="MGI"/>
</dbReference>
<dbReference type="GO" id="GO:0035234">
    <property type="term" value="P:ectopic germ cell programmed cell death"/>
    <property type="evidence" value="ECO:0000315"/>
    <property type="project" value="MGI"/>
</dbReference>
<dbReference type="GO" id="GO:0007566">
    <property type="term" value="P:embryo implantation"/>
    <property type="evidence" value="ECO:0000315"/>
    <property type="project" value="MGI"/>
</dbReference>
<dbReference type="GO" id="GO:0010467">
    <property type="term" value="P:gene expression"/>
    <property type="evidence" value="ECO:0000315"/>
    <property type="project" value="MGI"/>
</dbReference>
<dbReference type="GO" id="GO:0006749">
    <property type="term" value="P:glutathione metabolic process"/>
    <property type="evidence" value="ECO:0000315"/>
    <property type="project" value="MGI"/>
</dbReference>
<dbReference type="GO" id="GO:0060047">
    <property type="term" value="P:heart contraction"/>
    <property type="evidence" value="ECO:0000315"/>
    <property type="project" value="MGI"/>
</dbReference>
<dbReference type="GO" id="GO:0050665">
    <property type="term" value="P:hydrogen peroxide biosynthetic process"/>
    <property type="evidence" value="ECO:0000315"/>
    <property type="project" value="MGI"/>
</dbReference>
<dbReference type="GO" id="GO:0006879">
    <property type="term" value="P:intracellular iron ion homeostasis"/>
    <property type="evidence" value="ECO:0000315"/>
    <property type="project" value="MGI"/>
</dbReference>
<dbReference type="GO" id="GO:0007626">
    <property type="term" value="P:locomotory behavior"/>
    <property type="evidence" value="ECO:0000315"/>
    <property type="project" value="MGI"/>
</dbReference>
<dbReference type="GO" id="GO:0046716">
    <property type="term" value="P:muscle cell cellular homeostasis"/>
    <property type="evidence" value="ECO:0000315"/>
    <property type="project" value="MGI"/>
</dbReference>
<dbReference type="GO" id="GO:0002262">
    <property type="term" value="P:myeloid cell homeostasis"/>
    <property type="evidence" value="ECO:0000315"/>
    <property type="project" value="MGI"/>
</dbReference>
<dbReference type="GO" id="GO:0043066">
    <property type="term" value="P:negative regulation of apoptotic process"/>
    <property type="evidence" value="ECO:0000314"/>
    <property type="project" value="MGI"/>
</dbReference>
<dbReference type="GO" id="GO:0051093">
    <property type="term" value="P:negative regulation of developmental process"/>
    <property type="evidence" value="ECO:0000315"/>
    <property type="project" value="MGI"/>
</dbReference>
<dbReference type="GO" id="GO:0050728">
    <property type="term" value="P:negative regulation of inflammatory response"/>
    <property type="evidence" value="ECO:0000316"/>
    <property type="project" value="ARUK-UCL"/>
</dbReference>
<dbReference type="GO" id="GO:0043524">
    <property type="term" value="P:negative regulation of neuron apoptotic process"/>
    <property type="evidence" value="ECO:0000315"/>
    <property type="project" value="MGI"/>
</dbReference>
<dbReference type="GO" id="GO:2000242">
    <property type="term" value="P:negative regulation of reproductive process"/>
    <property type="evidence" value="ECO:0000315"/>
    <property type="project" value="MGI"/>
</dbReference>
<dbReference type="GO" id="GO:0060052">
    <property type="term" value="P:neurofilament cytoskeleton organization"/>
    <property type="evidence" value="ECO:0000315"/>
    <property type="project" value="MGI"/>
</dbReference>
<dbReference type="GO" id="GO:0019228">
    <property type="term" value="P:neuronal action potential"/>
    <property type="evidence" value="ECO:0000315"/>
    <property type="project" value="MGI"/>
</dbReference>
<dbReference type="GO" id="GO:0001541">
    <property type="term" value="P:ovarian follicle development"/>
    <property type="evidence" value="ECO:0000315"/>
    <property type="project" value="MGI"/>
</dbReference>
<dbReference type="GO" id="GO:0032287">
    <property type="term" value="P:peripheral nervous system myelin maintenance"/>
    <property type="evidence" value="ECO:0000315"/>
    <property type="project" value="MGI"/>
</dbReference>
<dbReference type="GO" id="GO:0001819">
    <property type="term" value="P:positive regulation of cytokine production"/>
    <property type="evidence" value="ECO:0000250"/>
    <property type="project" value="UniProtKB"/>
</dbReference>
<dbReference type="GO" id="GO:0043410">
    <property type="term" value="P:positive regulation of MAPK cascade"/>
    <property type="evidence" value="ECO:0000314"/>
    <property type="project" value="MGI"/>
</dbReference>
<dbReference type="GO" id="GO:1902177">
    <property type="term" value="P:positive regulation of oxidative stress-induced intrinsic apoptotic signaling pathway"/>
    <property type="evidence" value="ECO:0007669"/>
    <property type="project" value="Ensembl"/>
</dbReference>
<dbReference type="GO" id="GO:0050766">
    <property type="term" value="P:positive regulation of phagocytosis"/>
    <property type="evidence" value="ECO:0000316"/>
    <property type="project" value="ARUK-UCL"/>
</dbReference>
<dbReference type="GO" id="GO:0032930">
    <property type="term" value="P:positive regulation of superoxide anion generation"/>
    <property type="evidence" value="ECO:0007669"/>
    <property type="project" value="Ensembl"/>
</dbReference>
<dbReference type="GO" id="GO:0072593">
    <property type="term" value="P:reactive oxygen species metabolic process"/>
    <property type="evidence" value="ECO:0000250"/>
    <property type="project" value="UniProtKB"/>
</dbReference>
<dbReference type="GO" id="GO:0008217">
    <property type="term" value="P:regulation of blood pressure"/>
    <property type="evidence" value="ECO:0000315"/>
    <property type="project" value="MGI"/>
</dbReference>
<dbReference type="GO" id="GO:0051881">
    <property type="term" value="P:regulation of mitochondrial membrane potential"/>
    <property type="evidence" value="ECO:0000250"/>
    <property type="project" value="UniProtKB"/>
</dbReference>
<dbReference type="GO" id="GO:0040014">
    <property type="term" value="P:regulation of multicellular organism growth"/>
    <property type="evidence" value="ECO:0000315"/>
    <property type="project" value="MGI"/>
</dbReference>
<dbReference type="GO" id="GO:0060087">
    <property type="term" value="P:relaxation of vascular associated smooth muscle"/>
    <property type="evidence" value="ECO:0000315"/>
    <property type="project" value="MGI"/>
</dbReference>
<dbReference type="GO" id="GO:0019430">
    <property type="term" value="P:removal of superoxide radicals"/>
    <property type="evidence" value="ECO:0000315"/>
    <property type="project" value="MGI"/>
</dbReference>
<dbReference type="GO" id="GO:0001975">
    <property type="term" value="P:response to amphetamine"/>
    <property type="evidence" value="ECO:0007669"/>
    <property type="project" value="Ensembl"/>
</dbReference>
<dbReference type="GO" id="GO:0097332">
    <property type="term" value="P:response to antipsychotic drug"/>
    <property type="evidence" value="ECO:0007669"/>
    <property type="project" value="Ensembl"/>
</dbReference>
<dbReference type="GO" id="GO:0048678">
    <property type="term" value="P:response to axon injury"/>
    <property type="evidence" value="ECO:0000315"/>
    <property type="project" value="MGI"/>
</dbReference>
<dbReference type="GO" id="GO:0034465">
    <property type="term" value="P:response to carbon monoxide"/>
    <property type="evidence" value="ECO:0007669"/>
    <property type="project" value="Ensembl"/>
</dbReference>
<dbReference type="GO" id="GO:0046688">
    <property type="term" value="P:response to copper ion"/>
    <property type="evidence" value="ECO:0007669"/>
    <property type="project" value="Ensembl"/>
</dbReference>
<dbReference type="GO" id="GO:0045471">
    <property type="term" value="P:response to ethanol"/>
    <property type="evidence" value="ECO:0000315"/>
    <property type="project" value="MGI"/>
</dbReference>
<dbReference type="GO" id="GO:0009408">
    <property type="term" value="P:response to heat"/>
    <property type="evidence" value="ECO:0000315"/>
    <property type="project" value="MGI"/>
</dbReference>
<dbReference type="GO" id="GO:0042542">
    <property type="term" value="P:response to hydrogen peroxide"/>
    <property type="evidence" value="ECO:0000315"/>
    <property type="project" value="MGI"/>
</dbReference>
<dbReference type="GO" id="GO:0031667">
    <property type="term" value="P:response to nutrient levels"/>
    <property type="evidence" value="ECO:0007669"/>
    <property type="project" value="Ensembl"/>
</dbReference>
<dbReference type="GO" id="GO:0006979">
    <property type="term" value="P:response to oxidative stress"/>
    <property type="evidence" value="ECO:0000314"/>
    <property type="project" value="MGI"/>
</dbReference>
<dbReference type="GO" id="GO:0000302">
    <property type="term" value="P:response to reactive oxygen species"/>
    <property type="evidence" value="ECO:0000315"/>
    <property type="project" value="MGI"/>
</dbReference>
<dbReference type="GO" id="GO:0000303">
    <property type="term" value="P:response to superoxide"/>
    <property type="evidence" value="ECO:0000315"/>
    <property type="project" value="MGI"/>
</dbReference>
<dbReference type="GO" id="GO:0009410">
    <property type="term" value="P:response to xenobiotic stimulus"/>
    <property type="evidence" value="ECO:0000315"/>
    <property type="project" value="MGI"/>
</dbReference>
<dbReference type="GO" id="GO:0001895">
    <property type="term" value="P:retina homeostasis"/>
    <property type="evidence" value="ECO:0000315"/>
    <property type="project" value="MGI"/>
</dbReference>
<dbReference type="GO" id="GO:0008090">
    <property type="term" value="P:retrograde axonal transport"/>
    <property type="evidence" value="ECO:0000315"/>
    <property type="project" value="BHF-UCL"/>
</dbReference>
<dbReference type="GO" id="GO:0007605">
    <property type="term" value="P:sensory perception of sound"/>
    <property type="evidence" value="ECO:0000315"/>
    <property type="project" value="MGI"/>
</dbReference>
<dbReference type="GO" id="GO:0007283">
    <property type="term" value="P:spermatogenesis"/>
    <property type="evidence" value="ECO:0000315"/>
    <property type="project" value="MGI"/>
</dbReference>
<dbReference type="GO" id="GO:0042554">
    <property type="term" value="P:superoxide anion generation"/>
    <property type="evidence" value="ECO:0000314"/>
    <property type="project" value="MGI"/>
</dbReference>
<dbReference type="GO" id="GO:0006801">
    <property type="term" value="P:superoxide metabolic process"/>
    <property type="evidence" value="ECO:0000315"/>
    <property type="project" value="MGI"/>
</dbReference>
<dbReference type="GO" id="GO:0019226">
    <property type="term" value="P:transmission of nerve impulse"/>
    <property type="evidence" value="ECO:0000315"/>
    <property type="project" value="MGI"/>
</dbReference>
<dbReference type="CDD" id="cd00305">
    <property type="entry name" value="Cu-Zn_Superoxide_Dismutase"/>
    <property type="match status" value="1"/>
</dbReference>
<dbReference type="FunFam" id="2.60.40.200:FF:000001">
    <property type="entry name" value="Superoxide dismutase [Cu-Zn]"/>
    <property type="match status" value="1"/>
</dbReference>
<dbReference type="Gene3D" id="2.60.40.200">
    <property type="entry name" value="Superoxide dismutase, copper/zinc binding domain"/>
    <property type="match status" value="1"/>
</dbReference>
<dbReference type="InterPro" id="IPR036423">
    <property type="entry name" value="SOD-like_Cu/Zn_dom_sf"/>
</dbReference>
<dbReference type="InterPro" id="IPR024134">
    <property type="entry name" value="SOD_Cu/Zn_/chaperone"/>
</dbReference>
<dbReference type="InterPro" id="IPR018152">
    <property type="entry name" value="SOD_Cu/Zn_BS"/>
</dbReference>
<dbReference type="InterPro" id="IPR001424">
    <property type="entry name" value="SOD_Cu_Zn_dom"/>
</dbReference>
<dbReference type="PANTHER" id="PTHR10003">
    <property type="entry name" value="SUPEROXIDE DISMUTASE CU-ZN -RELATED"/>
    <property type="match status" value="1"/>
</dbReference>
<dbReference type="Pfam" id="PF00080">
    <property type="entry name" value="Sod_Cu"/>
    <property type="match status" value="1"/>
</dbReference>
<dbReference type="PRINTS" id="PR00068">
    <property type="entry name" value="CUZNDISMTASE"/>
</dbReference>
<dbReference type="SUPFAM" id="SSF49329">
    <property type="entry name" value="Cu,Zn superoxide dismutase-like"/>
    <property type="match status" value="1"/>
</dbReference>
<dbReference type="PROSITE" id="PS00087">
    <property type="entry name" value="SOD_CU_ZN_1"/>
    <property type="match status" value="1"/>
</dbReference>
<dbReference type="PROSITE" id="PS00332">
    <property type="entry name" value="SOD_CU_ZN_2"/>
    <property type="match status" value="1"/>
</dbReference>
<organism>
    <name type="scientific">Mus musculus</name>
    <name type="common">Mouse</name>
    <dbReference type="NCBI Taxonomy" id="10090"/>
    <lineage>
        <taxon>Eukaryota</taxon>
        <taxon>Metazoa</taxon>
        <taxon>Chordata</taxon>
        <taxon>Craniata</taxon>
        <taxon>Vertebrata</taxon>
        <taxon>Euteleostomi</taxon>
        <taxon>Mammalia</taxon>
        <taxon>Eutheria</taxon>
        <taxon>Euarchontoglires</taxon>
        <taxon>Glires</taxon>
        <taxon>Rodentia</taxon>
        <taxon>Myomorpha</taxon>
        <taxon>Muroidea</taxon>
        <taxon>Muridae</taxon>
        <taxon>Murinae</taxon>
        <taxon>Mus</taxon>
        <taxon>Mus</taxon>
    </lineage>
</organism>
<keyword id="KW-0002">3D-structure</keyword>
<keyword id="KW-0007">Acetylation</keyword>
<keyword id="KW-0049">Antioxidant</keyword>
<keyword id="KW-0186">Copper</keyword>
<keyword id="KW-0963">Cytoplasm</keyword>
<keyword id="KW-0903">Direct protein sequencing</keyword>
<keyword id="KW-1015">Disulfide bond</keyword>
<keyword id="KW-0449">Lipoprotein</keyword>
<keyword id="KW-0479">Metal-binding</keyword>
<keyword id="KW-0539">Nucleus</keyword>
<keyword id="KW-0560">Oxidoreductase</keyword>
<keyword id="KW-0564">Palmitate</keyword>
<keyword id="KW-0597">Phosphoprotein</keyword>
<keyword id="KW-1185">Reference proteome</keyword>
<keyword id="KW-0862">Zinc</keyword>
<evidence type="ECO:0000250" key="1"/>
<evidence type="ECO:0000250" key="2">
    <source>
        <dbReference type="UniProtKB" id="P00441"/>
    </source>
</evidence>
<evidence type="ECO:0000250" key="3">
    <source>
        <dbReference type="UniProtKB" id="P07632"/>
    </source>
</evidence>
<evidence type="ECO:0000269" key="4">
    <source>
    </source>
</evidence>
<evidence type="ECO:0000269" key="5">
    <source>
    </source>
</evidence>
<evidence type="ECO:0000269" key="6">
    <source>
    </source>
</evidence>
<evidence type="ECO:0000269" key="7">
    <source>
    </source>
</evidence>
<evidence type="ECO:0000305" key="8"/>
<evidence type="ECO:0000312" key="9">
    <source>
        <dbReference type="MGI" id="MGI:98351"/>
    </source>
</evidence>
<evidence type="ECO:0007744" key="10">
    <source>
    </source>
</evidence>
<evidence type="ECO:0007744" key="11">
    <source>
    </source>
</evidence>
<evidence type="ECO:0007744" key="12">
    <source>
    </source>
</evidence>
<evidence type="ECO:0007829" key="13">
    <source>
        <dbReference type="PDB" id="3GTT"/>
    </source>
</evidence>
<evidence type="ECO:0007829" key="14">
    <source>
        <dbReference type="PDB" id="3GTV"/>
    </source>
</evidence>
<evidence type="ECO:0007829" key="15">
    <source>
        <dbReference type="PDB" id="3LTV"/>
    </source>
</evidence>
<protein>
    <recommendedName>
        <fullName evidence="8">Superoxide dismutase [Cu-Zn]</fullName>
        <ecNumber evidence="2">1.15.1.1</ecNumber>
    </recommendedName>
</protein>
<gene>
    <name evidence="9" type="primary">Sod1</name>
</gene>
<proteinExistence type="evidence at protein level"/>